<comment type="function">
    <text evidence="1">Part of the ABC transporter complex PhnCDE involved in phosphonates import. Responsible for energy coupling to the transport system.</text>
</comment>
<comment type="catalytic activity">
    <reaction evidence="1">
        <text>phosphonate(out) + ATP + H2O = phosphonate(in) + ADP + phosphate + H(+)</text>
        <dbReference type="Rhea" id="RHEA:18065"/>
        <dbReference type="ChEBI" id="CHEBI:15377"/>
        <dbReference type="ChEBI" id="CHEBI:15378"/>
        <dbReference type="ChEBI" id="CHEBI:16215"/>
        <dbReference type="ChEBI" id="CHEBI:30616"/>
        <dbReference type="ChEBI" id="CHEBI:43474"/>
        <dbReference type="ChEBI" id="CHEBI:456216"/>
        <dbReference type="EC" id="7.3.2.2"/>
    </reaction>
</comment>
<comment type="subunit">
    <text evidence="1">The complex is composed of two ATP-binding proteins (PhnC), two transmembrane proteins (PhnE) and a solute-binding protein (PhnD).</text>
</comment>
<comment type="subcellular location">
    <subcellularLocation>
        <location evidence="1">Cell inner membrane</location>
        <topology evidence="1">Peripheral membrane protein</topology>
    </subcellularLocation>
</comment>
<comment type="similarity">
    <text evidence="1">Belongs to the ABC transporter superfamily. Phosphonates importer (TC 3.A.1.9.1) family.</text>
</comment>
<evidence type="ECO:0000255" key="1">
    <source>
        <dbReference type="HAMAP-Rule" id="MF_01713"/>
    </source>
</evidence>
<evidence type="ECO:0000256" key="2">
    <source>
        <dbReference type="SAM" id="MobiDB-lite"/>
    </source>
</evidence>
<dbReference type="EC" id="7.3.2.2" evidence="1"/>
<dbReference type="EMBL" id="CP000058">
    <property type="protein sequence ID" value="AAZ36906.1"/>
    <property type="molecule type" value="Genomic_DNA"/>
</dbReference>
<dbReference type="RefSeq" id="WP_011167640.1">
    <property type="nucleotide sequence ID" value="NC_005773.3"/>
</dbReference>
<dbReference type="SMR" id="Q48NM1"/>
<dbReference type="KEGG" id="psp:PSPPH_0705"/>
<dbReference type="eggNOG" id="COG3638">
    <property type="taxonomic scope" value="Bacteria"/>
</dbReference>
<dbReference type="HOGENOM" id="CLU_000604_1_22_6"/>
<dbReference type="Proteomes" id="UP000000551">
    <property type="component" value="Chromosome"/>
</dbReference>
<dbReference type="GO" id="GO:0005886">
    <property type="term" value="C:plasma membrane"/>
    <property type="evidence" value="ECO:0007669"/>
    <property type="project" value="UniProtKB-SubCell"/>
</dbReference>
<dbReference type="GO" id="GO:0015416">
    <property type="term" value="F:ABC-type phosphonate transporter activity"/>
    <property type="evidence" value="ECO:0007669"/>
    <property type="project" value="UniProtKB-EC"/>
</dbReference>
<dbReference type="GO" id="GO:0005524">
    <property type="term" value="F:ATP binding"/>
    <property type="evidence" value="ECO:0007669"/>
    <property type="project" value="UniProtKB-KW"/>
</dbReference>
<dbReference type="GO" id="GO:0016887">
    <property type="term" value="F:ATP hydrolysis activity"/>
    <property type="evidence" value="ECO:0007669"/>
    <property type="project" value="InterPro"/>
</dbReference>
<dbReference type="Gene3D" id="3.40.50.300">
    <property type="entry name" value="P-loop containing nucleotide triphosphate hydrolases"/>
    <property type="match status" value="1"/>
</dbReference>
<dbReference type="InterPro" id="IPR003593">
    <property type="entry name" value="AAA+_ATPase"/>
</dbReference>
<dbReference type="InterPro" id="IPR003439">
    <property type="entry name" value="ABC_transporter-like_ATP-bd"/>
</dbReference>
<dbReference type="InterPro" id="IPR017871">
    <property type="entry name" value="ABC_transporter-like_CS"/>
</dbReference>
<dbReference type="InterPro" id="IPR050086">
    <property type="entry name" value="MetN_ABC_transporter-like"/>
</dbReference>
<dbReference type="InterPro" id="IPR027417">
    <property type="entry name" value="P-loop_NTPase"/>
</dbReference>
<dbReference type="PANTHER" id="PTHR43166">
    <property type="entry name" value="AMINO ACID IMPORT ATP-BINDING PROTEIN"/>
    <property type="match status" value="1"/>
</dbReference>
<dbReference type="PANTHER" id="PTHR43166:SF6">
    <property type="entry name" value="PHOSPHONATES IMPORT ATP-BINDING PROTEIN PHNC"/>
    <property type="match status" value="1"/>
</dbReference>
<dbReference type="Pfam" id="PF00005">
    <property type="entry name" value="ABC_tran"/>
    <property type="match status" value="1"/>
</dbReference>
<dbReference type="SMART" id="SM00382">
    <property type="entry name" value="AAA"/>
    <property type="match status" value="1"/>
</dbReference>
<dbReference type="SUPFAM" id="SSF52540">
    <property type="entry name" value="P-loop containing nucleoside triphosphate hydrolases"/>
    <property type="match status" value="1"/>
</dbReference>
<dbReference type="PROSITE" id="PS00211">
    <property type="entry name" value="ABC_TRANSPORTER_1"/>
    <property type="match status" value="1"/>
</dbReference>
<dbReference type="PROSITE" id="PS50893">
    <property type="entry name" value="ABC_TRANSPORTER_2"/>
    <property type="match status" value="1"/>
</dbReference>
<dbReference type="PROSITE" id="PS51249">
    <property type="entry name" value="PHNC"/>
    <property type="match status" value="1"/>
</dbReference>
<name>PHNC1_PSE14</name>
<accession>Q48NM1</accession>
<keyword id="KW-0067">ATP-binding</keyword>
<keyword id="KW-0997">Cell inner membrane</keyword>
<keyword id="KW-1003">Cell membrane</keyword>
<keyword id="KW-0472">Membrane</keyword>
<keyword id="KW-0547">Nucleotide-binding</keyword>
<keyword id="KW-0918">Phosphonate transport</keyword>
<keyword id="KW-1278">Translocase</keyword>
<keyword id="KW-0813">Transport</keyword>
<reference key="1">
    <citation type="journal article" date="2005" name="J. Bacteriol.">
        <title>Whole-genome sequence analysis of Pseudomonas syringae pv. phaseolicola 1448A reveals divergence among pathovars in genes involved in virulence and transposition.</title>
        <authorList>
            <person name="Joardar V."/>
            <person name="Lindeberg M."/>
            <person name="Jackson R.W."/>
            <person name="Selengut J."/>
            <person name="Dodson R."/>
            <person name="Brinkac L.M."/>
            <person name="Daugherty S.C."/>
            <person name="DeBoy R.T."/>
            <person name="Durkin A.S."/>
            <person name="Gwinn Giglio M."/>
            <person name="Madupu R."/>
            <person name="Nelson W.C."/>
            <person name="Rosovitz M.J."/>
            <person name="Sullivan S.A."/>
            <person name="Crabtree J."/>
            <person name="Creasy T."/>
            <person name="Davidsen T.M."/>
            <person name="Haft D.H."/>
            <person name="Zafar N."/>
            <person name="Zhou L."/>
            <person name="Halpin R."/>
            <person name="Holley T."/>
            <person name="Khouri H.M."/>
            <person name="Feldblyum T.V."/>
            <person name="White O."/>
            <person name="Fraser C.M."/>
            <person name="Chatterjee A.K."/>
            <person name="Cartinhour S."/>
            <person name="Schneider D."/>
            <person name="Mansfield J.W."/>
            <person name="Collmer A."/>
            <person name="Buell R."/>
        </authorList>
    </citation>
    <scope>NUCLEOTIDE SEQUENCE [LARGE SCALE GENOMIC DNA]</scope>
    <source>
        <strain>1448A / Race 6</strain>
    </source>
</reference>
<organism>
    <name type="scientific">Pseudomonas savastanoi pv. phaseolicola (strain 1448A / Race 6)</name>
    <name type="common">Pseudomonas syringae pv. phaseolicola (strain 1448A / Race 6)</name>
    <dbReference type="NCBI Taxonomy" id="264730"/>
    <lineage>
        <taxon>Bacteria</taxon>
        <taxon>Pseudomonadati</taxon>
        <taxon>Pseudomonadota</taxon>
        <taxon>Gammaproteobacteria</taxon>
        <taxon>Pseudomonadales</taxon>
        <taxon>Pseudomonadaceae</taxon>
        <taxon>Pseudomonas</taxon>
    </lineage>
</organism>
<feature type="chain" id="PRO_0000274728" description="Phosphonates import ATP-binding protein PhnC 1">
    <location>
        <begin position="1"/>
        <end position="265"/>
    </location>
</feature>
<feature type="domain" description="ABC transporter" evidence="1">
    <location>
        <begin position="3"/>
        <end position="247"/>
    </location>
</feature>
<feature type="region of interest" description="Disordered" evidence="2">
    <location>
        <begin position="245"/>
        <end position="265"/>
    </location>
</feature>
<feature type="binding site" evidence="1">
    <location>
        <begin position="36"/>
        <end position="43"/>
    </location>
    <ligand>
        <name>ATP</name>
        <dbReference type="ChEBI" id="CHEBI:30616"/>
    </ligand>
</feature>
<proteinExistence type="inferred from homology"/>
<gene>
    <name evidence="1" type="primary">phnC1</name>
    <name type="ordered locus">PSPPH_0705</name>
</gene>
<protein>
    <recommendedName>
        <fullName evidence="1">Phosphonates import ATP-binding protein PhnC 1</fullName>
        <ecNumber evidence="1">7.3.2.2</ecNumber>
    </recommendedName>
</protein>
<sequence length="265" mass="28678">MTLRLSGIELRHSDGTLALRGLDLNIAGGERVAIIGPSGAGKTTLLNLLASALPPSAGQLEVLGADPWQLSSKRRQRLRSRIALVHQAPPLPARQRVITAVSAGKLGQWGLGKSLLNLLHPLDVSGTREVLARLDLADKLFERCQQLSGGQLQRVGIARALYQAPELLLADEPVSAMDPRLADHTLALLCQHAIEHHVTLVASLHAVELALAHFPRIIGVRDGQIHFDLAANEVDRQHLDTLYANEQLSPQPAPDVSETPWTPRC</sequence>